<comment type="function">
    <text evidence="1">Catalyzes the reversible interconversion of serine and glycine with tetrahydrofolate (THF) serving as the one-carbon carrier. This reaction serves as the major source of one-carbon groups required for the biosynthesis of purines, thymidylate, methionine, and other important biomolecules. Also exhibits THF-independent aldolase activity toward beta-hydroxyamino acids, producing glycine and aldehydes, via a retro-aldol mechanism.</text>
</comment>
<comment type="catalytic activity">
    <reaction evidence="1">
        <text>(6R)-5,10-methylene-5,6,7,8-tetrahydrofolate + glycine + H2O = (6S)-5,6,7,8-tetrahydrofolate + L-serine</text>
        <dbReference type="Rhea" id="RHEA:15481"/>
        <dbReference type="ChEBI" id="CHEBI:15377"/>
        <dbReference type="ChEBI" id="CHEBI:15636"/>
        <dbReference type="ChEBI" id="CHEBI:33384"/>
        <dbReference type="ChEBI" id="CHEBI:57305"/>
        <dbReference type="ChEBI" id="CHEBI:57453"/>
        <dbReference type="EC" id="2.1.2.1"/>
    </reaction>
</comment>
<comment type="cofactor">
    <cofactor evidence="1">
        <name>pyridoxal 5'-phosphate</name>
        <dbReference type="ChEBI" id="CHEBI:597326"/>
    </cofactor>
</comment>
<comment type="pathway">
    <text evidence="1">One-carbon metabolism; tetrahydrofolate interconversion.</text>
</comment>
<comment type="pathway">
    <text evidence="1">Amino-acid biosynthesis; glycine biosynthesis; glycine from L-serine: step 1/1.</text>
</comment>
<comment type="subunit">
    <text evidence="1">Homodimer.</text>
</comment>
<comment type="subcellular location">
    <subcellularLocation>
        <location evidence="1">Cytoplasm</location>
    </subcellularLocation>
</comment>
<comment type="similarity">
    <text evidence="1">Belongs to the SHMT family.</text>
</comment>
<organism>
    <name type="scientific">Agathobacter rectalis (strain ATCC 33656 / DSM 3377 / JCM 17463 / KCTC 5835 / VPI 0990)</name>
    <name type="common">Eubacterium rectale</name>
    <dbReference type="NCBI Taxonomy" id="515619"/>
    <lineage>
        <taxon>Bacteria</taxon>
        <taxon>Bacillati</taxon>
        <taxon>Bacillota</taxon>
        <taxon>Clostridia</taxon>
        <taxon>Lachnospirales</taxon>
        <taxon>Lachnospiraceae</taxon>
        <taxon>Agathobacter</taxon>
    </lineage>
</organism>
<gene>
    <name evidence="1" type="primary">glyA</name>
    <name type="ordered locus">EUBREC_1119</name>
</gene>
<sequence length="413" mass="45135">MYTLDDIKKEDPEIASAITDEFERQNSHIELIASENWVSPAVMSAMGSILTNKYAEGYPGRRYYGGCECVDEVEELARERAKELFGAEYVNVQPHSGAQANMAVQFAILKPGDTIMGMNLDHGGHLTHGSPVNFSGSYFHVVPYGVNDEGFIDYDKVEEIALECKPKMIIAGASAYARTIDFKRFREIADKVDAVLMVDMAHIAGLVAAGLHPSPIPYAHVTTTTTHKTLRGPRGGMILCSQEMQDKYNFNKAIFPGIQGGPLMHVIAAKAVCFKEALQPEFKEYQKQIVKNAQALCKGLQSRGIKIVSDGTDNHLMLVDLTPFGLTGKSIEKLLDAAHITANKNTIPNDPQKPFVTSGIRLGTPAATSRGLKEDDFDKVAEAIAMIIKEGESAVEPAKAIIKTLTDKYPLAF</sequence>
<dbReference type="EC" id="2.1.2.1" evidence="1"/>
<dbReference type="EMBL" id="CP001107">
    <property type="protein sequence ID" value="ACR74881.1"/>
    <property type="molecule type" value="Genomic_DNA"/>
</dbReference>
<dbReference type="RefSeq" id="WP_012741982.1">
    <property type="nucleotide sequence ID" value="NC_012781.1"/>
</dbReference>
<dbReference type="SMR" id="C4ZH69"/>
<dbReference type="STRING" id="515619.EUBREC_1119"/>
<dbReference type="PaxDb" id="515619-EUBREC_1119"/>
<dbReference type="GeneID" id="86987970"/>
<dbReference type="KEGG" id="ere:EUBREC_1119"/>
<dbReference type="HOGENOM" id="CLU_022477_2_1_9"/>
<dbReference type="UniPathway" id="UPA00193"/>
<dbReference type="UniPathway" id="UPA00288">
    <property type="reaction ID" value="UER01023"/>
</dbReference>
<dbReference type="Proteomes" id="UP000001477">
    <property type="component" value="Chromosome"/>
</dbReference>
<dbReference type="GO" id="GO:0005829">
    <property type="term" value="C:cytosol"/>
    <property type="evidence" value="ECO:0007669"/>
    <property type="project" value="TreeGrafter"/>
</dbReference>
<dbReference type="GO" id="GO:0004372">
    <property type="term" value="F:glycine hydroxymethyltransferase activity"/>
    <property type="evidence" value="ECO:0007669"/>
    <property type="project" value="UniProtKB-UniRule"/>
</dbReference>
<dbReference type="GO" id="GO:0030170">
    <property type="term" value="F:pyridoxal phosphate binding"/>
    <property type="evidence" value="ECO:0007669"/>
    <property type="project" value="UniProtKB-UniRule"/>
</dbReference>
<dbReference type="GO" id="GO:0019264">
    <property type="term" value="P:glycine biosynthetic process from serine"/>
    <property type="evidence" value="ECO:0007669"/>
    <property type="project" value="UniProtKB-UniRule"/>
</dbReference>
<dbReference type="GO" id="GO:0035999">
    <property type="term" value="P:tetrahydrofolate interconversion"/>
    <property type="evidence" value="ECO:0007669"/>
    <property type="project" value="UniProtKB-UniRule"/>
</dbReference>
<dbReference type="CDD" id="cd00378">
    <property type="entry name" value="SHMT"/>
    <property type="match status" value="1"/>
</dbReference>
<dbReference type="FunFam" id="3.40.640.10:FF:000001">
    <property type="entry name" value="Serine hydroxymethyltransferase"/>
    <property type="match status" value="1"/>
</dbReference>
<dbReference type="Gene3D" id="3.90.1150.10">
    <property type="entry name" value="Aspartate Aminotransferase, domain 1"/>
    <property type="match status" value="1"/>
</dbReference>
<dbReference type="Gene3D" id="3.40.640.10">
    <property type="entry name" value="Type I PLP-dependent aspartate aminotransferase-like (Major domain)"/>
    <property type="match status" value="1"/>
</dbReference>
<dbReference type="HAMAP" id="MF_00051">
    <property type="entry name" value="SHMT"/>
    <property type="match status" value="1"/>
</dbReference>
<dbReference type="InterPro" id="IPR015424">
    <property type="entry name" value="PyrdxlP-dep_Trfase"/>
</dbReference>
<dbReference type="InterPro" id="IPR015421">
    <property type="entry name" value="PyrdxlP-dep_Trfase_major"/>
</dbReference>
<dbReference type="InterPro" id="IPR015422">
    <property type="entry name" value="PyrdxlP-dep_Trfase_small"/>
</dbReference>
<dbReference type="InterPro" id="IPR001085">
    <property type="entry name" value="Ser_HO-MeTrfase"/>
</dbReference>
<dbReference type="InterPro" id="IPR049943">
    <property type="entry name" value="Ser_HO-MeTrfase-like"/>
</dbReference>
<dbReference type="InterPro" id="IPR019798">
    <property type="entry name" value="Ser_HO-MeTrfase_PLP_BS"/>
</dbReference>
<dbReference type="InterPro" id="IPR039429">
    <property type="entry name" value="SHMT-like_dom"/>
</dbReference>
<dbReference type="NCBIfam" id="NF000586">
    <property type="entry name" value="PRK00011.1"/>
    <property type="match status" value="1"/>
</dbReference>
<dbReference type="PANTHER" id="PTHR11680">
    <property type="entry name" value="SERINE HYDROXYMETHYLTRANSFERASE"/>
    <property type="match status" value="1"/>
</dbReference>
<dbReference type="PANTHER" id="PTHR11680:SF35">
    <property type="entry name" value="SERINE HYDROXYMETHYLTRANSFERASE 1"/>
    <property type="match status" value="1"/>
</dbReference>
<dbReference type="Pfam" id="PF00464">
    <property type="entry name" value="SHMT"/>
    <property type="match status" value="1"/>
</dbReference>
<dbReference type="PIRSF" id="PIRSF000412">
    <property type="entry name" value="SHMT"/>
    <property type="match status" value="1"/>
</dbReference>
<dbReference type="SUPFAM" id="SSF53383">
    <property type="entry name" value="PLP-dependent transferases"/>
    <property type="match status" value="1"/>
</dbReference>
<dbReference type="PROSITE" id="PS00096">
    <property type="entry name" value="SHMT"/>
    <property type="match status" value="1"/>
</dbReference>
<name>GLYA_AGARV</name>
<proteinExistence type="inferred from homology"/>
<keyword id="KW-0028">Amino-acid biosynthesis</keyword>
<keyword id="KW-0963">Cytoplasm</keyword>
<keyword id="KW-0554">One-carbon metabolism</keyword>
<keyword id="KW-0663">Pyridoxal phosphate</keyword>
<keyword id="KW-0808">Transferase</keyword>
<evidence type="ECO:0000255" key="1">
    <source>
        <dbReference type="HAMAP-Rule" id="MF_00051"/>
    </source>
</evidence>
<accession>C4ZH69</accession>
<reference key="1">
    <citation type="journal article" date="2009" name="Proc. Natl. Acad. Sci. U.S.A.">
        <title>Characterizing a model human gut microbiota composed of members of its two dominant bacterial phyla.</title>
        <authorList>
            <person name="Mahowald M.A."/>
            <person name="Rey F.E."/>
            <person name="Seedorf H."/>
            <person name="Turnbaugh P.J."/>
            <person name="Fulton R.S."/>
            <person name="Wollam A."/>
            <person name="Shah N."/>
            <person name="Wang C."/>
            <person name="Magrini V."/>
            <person name="Wilson R.K."/>
            <person name="Cantarel B.L."/>
            <person name="Coutinho P.M."/>
            <person name="Henrissat B."/>
            <person name="Crock L.W."/>
            <person name="Russell A."/>
            <person name="Verberkmoes N.C."/>
            <person name="Hettich R.L."/>
            <person name="Gordon J.I."/>
        </authorList>
    </citation>
    <scope>NUCLEOTIDE SEQUENCE [LARGE SCALE GENOMIC DNA]</scope>
    <source>
        <strain>ATCC 33656 / DSM 3377 / JCM 17463 / KCTC 5835 / LMG 30912 / VPI 0990</strain>
    </source>
</reference>
<protein>
    <recommendedName>
        <fullName evidence="1">Serine hydroxymethyltransferase</fullName>
        <shortName evidence="1">SHMT</shortName>
        <shortName evidence="1">Serine methylase</shortName>
        <ecNumber evidence="1">2.1.2.1</ecNumber>
    </recommendedName>
</protein>
<feature type="chain" id="PRO_1000202263" description="Serine hydroxymethyltransferase">
    <location>
        <begin position="1"/>
        <end position="413"/>
    </location>
</feature>
<feature type="binding site" evidence="1">
    <location>
        <position position="120"/>
    </location>
    <ligand>
        <name>(6S)-5,6,7,8-tetrahydrofolate</name>
        <dbReference type="ChEBI" id="CHEBI:57453"/>
    </ligand>
</feature>
<feature type="binding site" evidence="1">
    <location>
        <begin position="124"/>
        <end position="126"/>
    </location>
    <ligand>
        <name>(6S)-5,6,7,8-tetrahydrofolate</name>
        <dbReference type="ChEBI" id="CHEBI:57453"/>
    </ligand>
</feature>
<feature type="site" description="Plays an important role in substrate specificity" evidence="1">
    <location>
        <position position="227"/>
    </location>
</feature>
<feature type="modified residue" description="N6-(pyridoxal phosphate)lysine" evidence="1">
    <location>
        <position position="228"/>
    </location>
</feature>